<proteinExistence type="inferred from homology"/>
<reference key="1">
    <citation type="submission" date="2009-01" db="EMBL/GenBank/DDBJ databases">
        <title>Complete sequence of Anaeromyxobacter dehalogenans 2CP-1.</title>
        <authorList>
            <person name="Lucas S."/>
            <person name="Copeland A."/>
            <person name="Lapidus A."/>
            <person name="Glavina del Rio T."/>
            <person name="Dalin E."/>
            <person name="Tice H."/>
            <person name="Bruce D."/>
            <person name="Goodwin L."/>
            <person name="Pitluck S."/>
            <person name="Saunders E."/>
            <person name="Brettin T."/>
            <person name="Detter J.C."/>
            <person name="Han C."/>
            <person name="Larimer F."/>
            <person name="Land M."/>
            <person name="Hauser L."/>
            <person name="Kyrpides N."/>
            <person name="Ovchinnikova G."/>
            <person name="Beliaev A.S."/>
            <person name="Richardson P."/>
        </authorList>
    </citation>
    <scope>NUCLEOTIDE SEQUENCE [LARGE SCALE GENOMIC DNA]</scope>
    <source>
        <strain>2CP-1 / ATCC BAA-258</strain>
    </source>
</reference>
<comment type="catalytic activity">
    <reaction evidence="1">
        <text>D-erythro-1-(imidazol-4-yl)glycerol 3-phosphate = 3-(imidazol-4-yl)-2-oxopropyl phosphate + H2O</text>
        <dbReference type="Rhea" id="RHEA:11040"/>
        <dbReference type="ChEBI" id="CHEBI:15377"/>
        <dbReference type="ChEBI" id="CHEBI:57766"/>
        <dbReference type="ChEBI" id="CHEBI:58278"/>
        <dbReference type="EC" id="4.2.1.19"/>
    </reaction>
</comment>
<comment type="pathway">
    <text evidence="1">Amino-acid biosynthesis; L-histidine biosynthesis; L-histidine from 5-phospho-alpha-D-ribose 1-diphosphate: step 6/9.</text>
</comment>
<comment type="subcellular location">
    <subcellularLocation>
        <location evidence="1">Cytoplasm</location>
    </subcellularLocation>
</comment>
<comment type="similarity">
    <text evidence="1">Belongs to the imidazoleglycerol-phosphate dehydratase family.</text>
</comment>
<evidence type="ECO:0000255" key="1">
    <source>
        <dbReference type="HAMAP-Rule" id="MF_00076"/>
    </source>
</evidence>
<name>HIS7_ANAD2</name>
<sequence>MSRRAAVKTPRAGAAARRGAVARRTKETDVAVELRLEPGEAAISTGLPFFDHMLDQISRHGGMALTVRAKGDLQVDAHHTVEDVGIGLGEALRQALEDKAGLARYGHAVVPLDEALVEAVVDLSGRPHLTFNAKLPSGKKFIGGYDVDLTQDFLQALVNHARICVHVNVRYGRNLHHVVEAIFKATARALRAATAREGTALPSTKGTL</sequence>
<keyword id="KW-0028">Amino-acid biosynthesis</keyword>
<keyword id="KW-0963">Cytoplasm</keyword>
<keyword id="KW-0368">Histidine biosynthesis</keyword>
<keyword id="KW-0456">Lyase</keyword>
<gene>
    <name evidence="1" type="primary">hisB</name>
    <name type="ordered locus">A2cp1_0750</name>
</gene>
<dbReference type="EC" id="4.2.1.19" evidence="1"/>
<dbReference type="EMBL" id="CP001359">
    <property type="protein sequence ID" value="ACL64105.1"/>
    <property type="molecule type" value="Genomic_DNA"/>
</dbReference>
<dbReference type="RefSeq" id="WP_012632131.1">
    <property type="nucleotide sequence ID" value="NC_011891.1"/>
</dbReference>
<dbReference type="SMR" id="B8JDL0"/>
<dbReference type="KEGG" id="acp:A2cp1_0750"/>
<dbReference type="HOGENOM" id="CLU_044308_3_0_7"/>
<dbReference type="UniPathway" id="UPA00031">
    <property type="reaction ID" value="UER00011"/>
</dbReference>
<dbReference type="Proteomes" id="UP000007089">
    <property type="component" value="Chromosome"/>
</dbReference>
<dbReference type="GO" id="GO:0005737">
    <property type="term" value="C:cytoplasm"/>
    <property type="evidence" value="ECO:0007669"/>
    <property type="project" value="UniProtKB-SubCell"/>
</dbReference>
<dbReference type="GO" id="GO:0004424">
    <property type="term" value="F:imidazoleglycerol-phosphate dehydratase activity"/>
    <property type="evidence" value="ECO:0007669"/>
    <property type="project" value="UniProtKB-UniRule"/>
</dbReference>
<dbReference type="GO" id="GO:0000105">
    <property type="term" value="P:L-histidine biosynthetic process"/>
    <property type="evidence" value="ECO:0007669"/>
    <property type="project" value="UniProtKB-UniRule"/>
</dbReference>
<dbReference type="CDD" id="cd07914">
    <property type="entry name" value="IGPD"/>
    <property type="match status" value="1"/>
</dbReference>
<dbReference type="FunFam" id="3.30.230.40:FF:000001">
    <property type="entry name" value="Imidazoleglycerol-phosphate dehydratase HisB"/>
    <property type="match status" value="1"/>
</dbReference>
<dbReference type="FunFam" id="3.30.230.40:FF:000003">
    <property type="entry name" value="Imidazoleglycerol-phosphate dehydratase HisB"/>
    <property type="match status" value="1"/>
</dbReference>
<dbReference type="Gene3D" id="3.30.230.40">
    <property type="entry name" value="Imidazole glycerol phosphate dehydratase, domain 1"/>
    <property type="match status" value="2"/>
</dbReference>
<dbReference type="HAMAP" id="MF_00076">
    <property type="entry name" value="HisB"/>
    <property type="match status" value="1"/>
</dbReference>
<dbReference type="InterPro" id="IPR038494">
    <property type="entry name" value="IGPD_sf"/>
</dbReference>
<dbReference type="InterPro" id="IPR000807">
    <property type="entry name" value="ImidazoleglycerolP_deHydtase"/>
</dbReference>
<dbReference type="InterPro" id="IPR020565">
    <property type="entry name" value="ImidazoleglycerP_deHydtase_CS"/>
</dbReference>
<dbReference type="InterPro" id="IPR020568">
    <property type="entry name" value="Ribosomal_Su5_D2-typ_SF"/>
</dbReference>
<dbReference type="NCBIfam" id="NF002111">
    <property type="entry name" value="PRK00951.2-1"/>
    <property type="match status" value="1"/>
</dbReference>
<dbReference type="NCBIfam" id="NF002114">
    <property type="entry name" value="PRK00951.2-4"/>
    <property type="match status" value="1"/>
</dbReference>
<dbReference type="PANTHER" id="PTHR23133:SF2">
    <property type="entry name" value="IMIDAZOLEGLYCEROL-PHOSPHATE DEHYDRATASE"/>
    <property type="match status" value="1"/>
</dbReference>
<dbReference type="PANTHER" id="PTHR23133">
    <property type="entry name" value="IMIDAZOLEGLYCEROL-PHOSPHATE DEHYDRATASE HIS7"/>
    <property type="match status" value="1"/>
</dbReference>
<dbReference type="Pfam" id="PF00475">
    <property type="entry name" value="IGPD"/>
    <property type="match status" value="1"/>
</dbReference>
<dbReference type="SUPFAM" id="SSF54211">
    <property type="entry name" value="Ribosomal protein S5 domain 2-like"/>
    <property type="match status" value="2"/>
</dbReference>
<dbReference type="PROSITE" id="PS00955">
    <property type="entry name" value="IGP_DEHYDRATASE_2"/>
    <property type="match status" value="1"/>
</dbReference>
<protein>
    <recommendedName>
        <fullName evidence="1">Imidazoleglycerol-phosphate dehydratase</fullName>
        <shortName evidence="1">IGPD</shortName>
        <ecNumber evidence="1">4.2.1.19</ecNumber>
    </recommendedName>
</protein>
<accession>B8JDL0</accession>
<organism>
    <name type="scientific">Anaeromyxobacter dehalogenans (strain 2CP-1 / ATCC BAA-258)</name>
    <dbReference type="NCBI Taxonomy" id="455488"/>
    <lineage>
        <taxon>Bacteria</taxon>
        <taxon>Pseudomonadati</taxon>
        <taxon>Myxococcota</taxon>
        <taxon>Myxococcia</taxon>
        <taxon>Myxococcales</taxon>
        <taxon>Cystobacterineae</taxon>
        <taxon>Anaeromyxobacteraceae</taxon>
        <taxon>Anaeromyxobacter</taxon>
    </lineage>
</organism>
<feature type="chain" id="PRO_1000118209" description="Imidazoleglycerol-phosphate dehydratase">
    <location>
        <begin position="1"/>
        <end position="208"/>
    </location>
</feature>